<comment type="function">
    <text evidence="1">Part of pre- and post-splicing multiprotein mRNP complexes. Auxiliary component of the splicing-dependent multiprotein exon junction complex (EJC) deposited at splice junction on mRNAs. The EJC is a dynamic structure consisting of core proteins and several peripheral nuclear and cytoplasmic associated factors that join the complex only transiently either during EJC assembly or during subsequent mRNA metabolism. Component of the ASAP and PSAP complexes which bind RNA in a sequence-independent manner and are proposed to be recruited to the EJC prior to or during the splicing process and to regulate specific excision of introns in specific transcription subsets. The ASAP complex can inhibit RNA processing during in vitro splicing reactions. The ASAP complex promotes apoptosis and is disassembled after induction of apoptosis. Enhances the formation of the ATP-dependent A complex of the spliceosome. Involved in both constitutive splicing and, in association with SRP54 and TRA2B/SFRS10, in distinctive modulation of alternative splicing in a substrate-dependent manner. Involved in the splicing modulation of BCL2L1/Bcl-X (and probably other apoptotic genes); specifically inhibits formation of proapoptotic isoforms such as Bcl-X(S); the activity is different from the established EJC assembly and function. Participates in mRNA 3'-end cleavage. Involved in UPF2-dependent nonsense-mediated decay (NMD) of mRNAs containing premature stop codons. Also mediates increase of mRNA abundance and translational efficiency. Binds spliced mRNA 20-25 nt upstream of exon-exon junctions (By similarity).</text>
</comment>
<comment type="subunit">
    <text evidence="1">Found in mRNA splicing-dependent exon junction complexes (EJC). Found in a post-splicing complex with NXF1, RBM8A, UPF1, UPF2, UPF3A, UPF3B and RNPS1. Component of the heterotrimeric ASAP (apoptosis- and splicing-associated protein) and PSAP complexes consisting of RNPS1, SAP18 and either ACIN1 or PNN, respectively; the ASAP and PSAP complexes probably are formed mutually exclusive. Component of the active spliceosome. Associates with polysomes. Interacts with the cleaved p110 isoform of CDC2L1, CSNK2A1, PNN, SART3, SRP54, SRRM1 and TRA2B/SFRS10 (By similarity).</text>
</comment>
<comment type="subcellular location">
    <subcellularLocation>
        <location evidence="1">Nucleus</location>
    </subcellularLocation>
    <subcellularLocation>
        <location evidence="1">Nucleus speckle</location>
    </subcellularLocation>
    <subcellularLocation>
        <location evidence="1">Cytoplasm</location>
    </subcellularLocation>
    <text evidence="1">Nucleocytoplasmic shuttling protein. Colocalizes with the core EJC, ALYREF/THOC4, NXF1 and UAP56 in the nucleus and nuclear speckles (By similarity).</text>
</comment>
<comment type="domain">
    <text evidence="1">The RRM domain is required for the formation of the ASAP complex.</text>
</comment>
<comment type="PTM">
    <text evidence="1">Phosphorylated on one or more of the four Ser/Thr residues (Ser-43, Thr-49, Ser-52 or Ser-53). Ser-53 phosphorylation site is important for splicing and translation stimulation activity in vitro (By similarity).</text>
</comment>
<comment type="similarity">
    <text evidence="5">Belongs to the splicing factor SR family.</text>
</comment>
<dbReference type="EMBL" id="AB169512">
    <property type="protein sequence ID" value="BAE01594.1"/>
    <property type="molecule type" value="mRNA"/>
</dbReference>
<dbReference type="RefSeq" id="XP_005591024.1">
    <property type="nucleotide sequence ID" value="XM_005590967.2"/>
</dbReference>
<dbReference type="RefSeq" id="XP_005591028.1">
    <property type="nucleotide sequence ID" value="XM_005590971.4"/>
</dbReference>
<dbReference type="RefSeq" id="XP_015297914.1">
    <property type="nucleotide sequence ID" value="XM_015442428.1"/>
</dbReference>
<dbReference type="RefSeq" id="XP_015297915.1">
    <property type="nucleotide sequence ID" value="XM_015442429.1"/>
</dbReference>
<dbReference type="RefSeq" id="XP_065393141.1">
    <property type="nucleotide sequence ID" value="XM_065537069.1"/>
</dbReference>
<dbReference type="SMR" id="Q4R5N1"/>
<dbReference type="STRING" id="9541.ENSMFAP00000029854"/>
<dbReference type="Ensembl" id="ENSMFAT00000004049.2">
    <property type="protein sequence ID" value="ENSMFAP00000029846.2"/>
    <property type="gene ID" value="ENSMFAG00000042142.2"/>
</dbReference>
<dbReference type="GeneID" id="102118439"/>
<dbReference type="CTD" id="10921"/>
<dbReference type="VEuPathDB" id="HostDB:ENSMFAG00000042142"/>
<dbReference type="eggNOG" id="KOG4209">
    <property type="taxonomic scope" value="Eukaryota"/>
</dbReference>
<dbReference type="GeneTree" id="ENSGT00730000111029"/>
<dbReference type="OrthoDB" id="18158at314294"/>
<dbReference type="Proteomes" id="UP000233100">
    <property type="component" value="Chromosome 20"/>
</dbReference>
<dbReference type="Bgee" id="ENSMFAG00000042142">
    <property type="expression patterns" value="Expressed in bone marrow and 13 other cell types or tissues"/>
</dbReference>
<dbReference type="GO" id="GO:0061574">
    <property type="term" value="C:ASAP complex"/>
    <property type="evidence" value="ECO:0000250"/>
    <property type="project" value="UniProtKB"/>
</dbReference>
<dbReference type="GO" id="GO:0005737">
    <property type="term" value="C:cytoplasm"/>
    <property type="evidence" value="ECO:0007669"/>
    <property type="project" value="UniProtKB-SubCell"/>
</dbReference>
<dbReference type="GO" id="GO:0016607">
    <property type="term" value="C:nuclear speck"/>
    <property type="evidence" value="ECO:0007669"/>
    <property type="project" value="UniProtKB-SubCell"/>
</dbReference>
<dbReference type="GO" id="GO:0003723">
    <property type="term" value="F:RNA binding"/>
    <property type="evidence" value="ECO:0007669"/>
    <property type="project" value="UniProtKB-KW"/>
</dbReference>
<dbReference type="GO" id="GO:0000398">
    <property type="term" value="P:mRNA splicing, via spliceosome"/>
    <property type="evidence" value="ECO:0007669"/>
    <property type="project" value="TreeGrafter"/>
</dbReference>
<dbReference type="GO" id="GO:0048025">
    <property type="term" value="P:negative regulation of mRNA splicing, via spliceosome"/>
    <property type="evidence" value="ECO:0000250"/>
    <property type="project" value="UniProtKB"/>
</dbReference>
<dbReference type="GO" id="GO:0000184">
    <property type="term" value="P:nuclear-transcribed mRNA catabolic process, nonsense-mediated decay"/>
    <property type="evidence" value="ECO:0007669"/>
    <property type="project" value="UniProtKB-KW"/>
</dbReference>
<dbReference type="GO" id="GO:0043065">
    <property type="term" value="P:positive regulation of apoptotic process"/>
    <property type="evidence" value="ECO:0000250"/>
    <property type="project" value="UniProtKB"/>
</dbReference>
<dbReference type="GO" id="GO:0000381">
    <property type="term" value="P:regulation of alternative mRNA splicing, via spliceosome"/>
    <property type="evidence" value="ECO:0000250"/>
    <property type="project" value="UniProtKB"/>
</dbReference>
<dbReference type="CDD" id="cd12365">
    <property type="entry name" value="RRM_RNPS1"/>
    <property type="match status" value="1"/>
</dbReference>
<dbReference type="Gene3D" id="3.30.70.330">
    <property type="match status" value="1"/>
</dbReference>
<dbReference type="InterPro" id="IPR012677">
    <property type="entry name" value="Nucleotide-bd_a/b_plait_sf"/>
</dbReference>
<dbReference type="InterPro" id="IPR035979">
    <property type="entry name" value="RBD_domain_sf"/>
</dbReference>
<dbReference type="InterPro" id="IPR034201">
    <property type="entry name" value="RNPS1_RRM"/>
</dbReference>
<dbReference type="InterPro" id="IPR000504">
    <property type="entry name" value="RRM_dom"/>
</dbReference>
<dbReference type="PANTHER" id="PTHR15481">
    <property type="entry name" value="RIBONUCLEIC ACID BINDING PROTEIN S1"/>
    <property type="match status" value="1"/>
</dbReference>
<dbReference type="PANTHER" id="PTHR15481:SF2">
    <property type="entry name" value="RNA-BINDING PROTEIN WITH SERINE-RICH DOMAIN 1"/>
    <property type="match status" value="1"/>
</dbReference>
<dbReference type="Pfam" id="PF00076">
    <property type="entry name" value="RRM_1"/>
    <property type="match status" value="1"/>
</dbReference>
<dbReference type="SMART" id="SM00360">
    <property type="entry name" value="RRM"/>
    <property type="match status" value="1"/>
</dbReference>
<dbReference type="SUPFAM" id="SSF54928">
    <property type="entry name" value="RNA-binding domain, RBD"/>
    <property type="match status" value="1"/>
</dbReference>
<dbReference type="PROSITE" id="PS50102">
    <property type="entry name" value="RRM"/>
    <property type="match status" value="1"/>
</dbReference>
<evidence type="ECO:0000250" key="1"/>
<evidence type="ECO:0000250" key="2">
    <source>
        <dbReference type="UniProtKB" id="Q15287"/>
    </source>
</evidence>
<evidence type="ECO:0000255" key="3">
    <source>
        <dbReference type="PROSITE-ProRule" id="PRU00176"/>
    </source>
</evidence>
<evidence type="ECO:0000256" key="4">
    <source>
        <dbReference type="SAM" id="MobiDB-lite"/>
    </source>
</evidence>
<evidence type="ECO:0000305" key="5"/>
<sequence length="305" mass="34208">MDLSGVKKKSLLGVKENNKKSSTRAPSPTKRKDRSDEKSKDRSKDKGATKESSEKDRGRDKTRKRRSASSGSSSTRSRSSSTSSSGSSTSTGSSSGSSSSSASSRSGSSSTSRSSSSSSSSGSPSPSRRRHDNRRRSRSKSKPPKRDEKERKRRSPSPKPTKVHIGRLTRNVTKDHIMEIFSTYGKIKMIDMPVERMHPHLSKGYAYVEFENPDEAEKALKHMDGGQIDGQEITATAVLAPWPRPPPRRFSPPRRMLPPPPMWRRSPPRMRRRSRSPRRRSPVRRRSRSPGRRRHRSRSSSNSSR</sequence>
<feature type="chain" id="PRO_0000081818" description="RNA-binding protein with serine-rich domain 1">
    <location>
        <begin position="1"/>
        <end position="305"/>
    </location>
</feature>
<feature type="domain" description="RRM" evidence="3">
    <location>
        <begin position="161"/>
        <end position="240"/>
    </location>
</feature>
<feature type="region of interest" description="Necessary for interaction with the cleaved p110 isoform of CDC2L1" evidence="1">
    <location>
        <begin position="1"/>
        <end position="220"/>
    </location>
</feature>
<feature type="region of interest" description="Disordered" evidence="4">
    <location>
        <begin position="1"/>
        <end position="170"/>
    </location>
</feature>
<feature type="region of interest" description="Necessary for interaction with SRP54, nuclear localization and exon-skipping" evidence="1">
    <location>
        <begin position="1"/>
        <end position="161"/>
    </location>
</feature>
<feature type="region of interest" description="Necessary for interactions with UPF2 and UPF3B and UPF2-dependent NMD" evidence="1">
    <location>
        <begin position="69"/>
        <end position="121"/>
    </location>
</feature>
<feature type="region of interest" description="Necessary for interaction with PNN and exon-skipping" evidence="1">
    <location>
        <begin position="156"/>
        <end position="242"/>
    </location>
</feature>
<feature type="region of interest" description="Interaction with SAP18 and ACIN1" evidence="1">
    <location>
        <begin position="159"/>
        <end position="244"/>
    </location>
</feature>
<feature type="region of interest" description="Necessary for interaction with TRA2B, nuclear localization and exon-skipping" evidence="1">
    <location>
        <begin position="238"/>
        <end position="305"/>
    </location>
</feature>
<feature type="region of interest" description="Disordered" evidence="4">
    <location>
        <begin position="240"/>
        <end position="305"/>
    </location>
</feature>
<feature type="compositionally biased region" description="Basic residues" evidence="4">
    <location>
        <begin position="1"/>
        <end position="10"/>
    </location>
</feature>
<feature type="compositionally biased region" description="Basic and acidic residues" evidence="4">
    <location>
        <begin position="33"/>
        <end position="59"/>
    </location>
</feature>
<feature type="compositionally biased region" description="Low complexity" evidence="4">
    <location>
        <begin position="68"/>
        <end position="126"/>
    </location>
</feature>
<feature type="compositionally biased region" description="Basic residues" evidence="4">
    <location>
        <begin position="127"/>
        <end position="143"/>
    </location>
</feature>
<feature type="compositionally biased region" description="Basic residues" evidence="4">
    <location>
        <begin position="151"/>
        <end position="167"/>
    </location>
</feature>
<feature type="compositionally biased region" description="Pro residues" evidence="4">
    <location>
        <begin position="242"/>
        <end position="262"/>
    </location>
</feature>
<feature type="compositionally biased region" description="Basic residues" evidence="4">
    <location>
        <begin position="266"/>
        <end position="298"/>
    </location>
</feature>
<feature type="modified residue" description="Phosphoserine" evidence="2">
    <location>
        <position position="53"/>
    </location>
</feature>
<feature type="modified residue" description="Phosphoserine" evidence="2">
    <location>
        <position position="155"/>
    </location>
</feature>
<feature type="modified residue" description="Phosphoserine" evidence="2">
    <location>
        <position position="157"/>
    </location>
</feature>
<feature type="modified residue" description="Phosphothreonine" evidence="2">
    <location>
        <position position="161"/>
    </location>
</feature>
<feature type="modified residue" description="N6-acetyllysine" evidence="2">
    <location>
        <position position="218"/>
    </location>
</feature>
<feature type="cross-link" description="Glycyl lysine isopeptide (Lys-Gly) (interchain with G-Cter in SUMO2)" evidence="2">
    <location>
        <position position="7"/>
    </location>
</feature>
<feature type="cross-link" description="Glycyl lysine isopeptide (Lys-Gly) (interchain with G-Cter in SUMO2)" evidence="2">
    <location>
        <position position="15"/>
    </location>
</feature>
<organism>
    <name type="scientific">Macaca fascicularis</name>
    <name type="common">Crab-eating macaque</name>
    <name type="synonym">Cynomolgus monkey</name>
    <dbReference type="NCBI Taxonomy" id="9541"/>
    <lineage>
        <taxon>Eukaryota</taxon>
        <taxon>Metazoa</taxon>
        <taxon>Chordata</taxon>
        <taxon>Craniata</taxon>
        <taxon>Vertebrata</taxon>
        <taxon>Euteleostomi</taxon>
        <taxon>Mammalia</taxon>
        <taxon>Eutheria</taxon>
        <taxon>Euarchontoglires</taxon>
        <taxon>Primates</taxon>
        <taxon>Haplorrhini</taxon>
        <taxon>Catarrhini</taxon>
        <taxon>Cercopithecidae</taxon>
        <taxon>Cercopithecinae</taxon>
        <taxon>Macaca</taxon>
    </lineage>
</organism>
<protein>
    <recommendedName>
        <fullName>RNA-binding protein with serine-rich domain 1</fullName>
    </recommendedName>
</protein>
<name>RNPS1_MACFA</name>
<keyword id="KW-0007">Acetylation</keyword>
<keyword id="KW-0963">Cytoplasm</keyword>
<keyword id="KW-1017">Isopeptide bond</keyword>
<keyword id="KW-0507">mRNA processing</keyword>
<keyword id="KW-0508">mRNA splicing</keyword>
<keyword id="KW-0866">Nonsense-mediated mRNA decay</keyword>
<keyword id="KW-0539">Nucleus</keyword>
<keyword id="KW-0597">Phosphoprotein</keyword>
<keyword id="KW-1185">Reference proteome</keyword>
<keyword id="KW-0694">RNA-binding</keyword>
<keyword id="KW-0832">Ubl conjugation</keyword>
<reference key="1">
    <citation type="submission" date="2005-09" db="EMBL/GenBank/DDBJ databases">
        <title>DNA sequences of macaque genes expressed in brain or testis and its evolutionary implications.</title>
        <authorList>
            <consortium name="International consortium for macaque cDNA sequencing and analysis"/>
        </authorList>
    </citation>
    <scope>NUCLEOTIDE SEQUENCE [LARGE SCALE MRNA]</scope>
    <source>
        <tissue>Brain cortex</tissue>
    </source>
</reference>
<gene>
    <name type="primary">RNPS1</name>
    <name type="ORF">QccE-12931</name>
</gene>
<accession>Q4R5N1</accession>
<proteinExistence type="evidence at transcript level"/>